<sequence length="574" mass="66062">MSSGIILLIVAIVLLVIIAYLVGVIIRKRNDSLITSLEERKQALFALPVNDEIEEVKSLHLIGQSQTSFREWNQKWVDLTVNSFADIENHIFEAENLNDTFNFIRAKHEINSVESQLNLVEEDIASIREALNILKEQEEKNSARVTHALDLYEKLQASISENEDNFGSTMPEIDKQMKNIETEFSQFVALNSSGDPVEASEVLDRAEEHTIALGQITEQIPAIVAKLEDDFPDQLDDLETGYRRLLEENYHFPEKNIEARFQEIRESIRANSSELVTLDLDRAREENTHIQERIDSLYEVFEREIAAYKVAAKNSKMLPRYLAHVKRNNEQLKDEIARLSRKYILSETESLTVKAFEKDIKEIEDSTLAVAEQFGLQEKPFSELQVTFERSIKTLTNVESGQMDVFAAVKDIEKIESQARHNLDVYVTQLHMIKRYMEKRHLPGIPQDFLSAFFTTSSQLEALMDELSRGRINIEAVSRLSEVATVAIANLEDLTYQVVQNATLTEQLLQYSNRYRSFEAGVQSSFEHALRLFEVENDYQASFDEISYALETVEPGVTDRFVNSYEKTREHIRF</sequence>
<organism>
    <name type="scientific">Streptococcus pyogenes serotype M49 (strain NZ131)</name>
    <dbReference type="NCBI Taxonomy" id="471876"/>
    <lineage>
        <taxon>Bacteria</taxon>
        <taxon>Bacillati</taxon>
        <taxon>Bacillota</taxon>
        <taxon>Bacilli</taxon>
        <taxon>Lactobacillales</taxon>
        <taxon>Streptococcaceae</taxon>
        <taxon>Streptococcus</taxon>
    </lineage>
</organism>
<dbReference type="EMBL" id="CP000829">
    <property type="protein sequence ID" value="ACI60887.1"/>
    <property type="molecule type" value="Genomic_DNA"/>
</dbReference>
<dbReference type="SMR" id="B5XKM5"/>
<dbReference type="KEGG" id="soz:Spy49_0561"/>
<dbReference type="HOGENOM" id="CLU_034079_2_0_9"/>
<dbReference type="Proteomes" id="UP000001039">
    <property type="component" value="Chromosome"/>
</dbReference>
<dbReference type="GO" id="GO:0005886">
    <property type="term" value="C:plasma membrane"/>
    <property type="evidence" value="ECO:0007669"/>
    <property type="project" value="UniProtKB-SubCell"/>
</dbReference>
<dbReference type="GO" id="GO:0005940">
    <property type="term" value="C:septin ring"/>
    <property type="evidence" value="ECO:0007669"/>
    <property type="project" value="InterPro"/>
</dbReference>
<dbReference type="GO" id="GO:0000917">
    <property type="term" value="P:division septum assembly"/>
    <property type="evidence" value="ECO:0007669"/>
    <property type="project" value="UniProtKB-KW"/>
</dbReference>
<dbReference type="GO" id="GO:0000921">
    <property type="term" value="P:septin ring assembly"/>
    <property type="evidence" value="ECO:0007669"/>
    <property type="project" value="InterPro"/>
</dbReference>
<dbReference type="HAMAP" id="MF_00728">
    <property type="entry name" value="EzrA"/>
    <property type="match status" value="1"/>
</dbReference>
<dbReference type="InterPro" id="IPR010379">
    <property type="entry name" value="EzrA"/>
</dbReference>
<dbReference type="NCBIfam" id="NF003407">
    <property type="entry name" value="PRK04778.1-1"/>
    <property type="match status" value="1"/>
</dbReference>
<dbReference type="NCBIfam" id="NF003410">
    <property type="entry name" value="PRK04778.1-4"/>
    <property type="match status" value="1"/>
</dbReference>
<dbReference type="Pfam" id="PF06160">
    <property type="entry name" value="EzrA"/>
    <property type="match status" value="1"/>
</dbReference>
<protein>
    <recommendedName>
        <fullName evidence="1">Septation ring formation regulator EzrA</fullName>
    </recommendedName>
</protein>
<feature type="chain" id="PRO_1000132710" description="Septation ring formation regulator EzrA">
    <location>
        <begin position="1"/>
        <end position="574"/>
    </location>
</feature>
<feature type="topological domain" description="Extracellular" evidence="1">
    <location>
        <begin position="1"/>
        <end position="7"/>
    </location>
</feature>
<feature type="transmembrane region" description="Helical" evidence="1">
    <location>
        <begin position="8"/>
        <end position="26"/>
    </location>
</feature>
<feature type="topological domain" description="Cytoplasmic" evidence="1">
    <location>
        <begin position="27"/>
        <end position="574"/>
    </location>
</feature>
<feature type="coiled-coil region" evidence="1">
    <location>
        <begin position="102"/>
        <end position="141"/>
    </location>
</feature>
<feature type="coiled-coil region" evidence="1">
    <location>
        <begin position="274"/>
        <end position="350"/>
    </location>
</feature>
<feature type="coiled-coil region" evidence="1">
    <location>
        <begin position="459"/>
        <end position="520"/>
    </location>
</feature>
<accession>B5XKM5</accession>
<proteinExistence type="inferred from homology"/>
<reference key="1">
    <citation type="journal article" date="2008" name="J. Bacteriol.">
        <title>Genome sequence of a nephritogenic and highly transformable M49 strain of Streptococcus pyogenes.</title>
        <authorList>
            <person name="McShan W.M."/>
            <person name="Ferretti J.J."/>
            <person name="Karasawa T."/>
            <person name="Suvorov A.N."/>
            <person name="Lin S."/>
            <person name="Qin B."/>
            <person name="Jia H."/>
            <person name="Kenton S."/>
            <person name="Najar F."/>
            <person name="Wu H."/>
            <person name="Scott J."/>
            <person name="Roe B.A."/>
            <person name="Savic D.J."/>
        </authorList>
    </citation>
    <scope>NUCLEOTIDE SEQUENCE [LARGE SCALE GENOMIC DNA]</scope>
    <source>
        <strain>NZ131</strain>
    </source>
</reference>
<name>EZRA_STRPZ</name>
<gene>
    <name evidence="1" type="primary">ezrA</name>
    <name type="ordered locus">Spy49_0561</name>
</gene>
<evidence type="ECO:0000255" key="1">
    <source>
        <dbReference type="HAMAP-Rule" id="MF_00728"/>
    </source>
</evidence>
<comment type="function">
    <text evidence="1">Negative regulator of FtsZ ring formation; modulates the frequency and position of FtsZ ring formation. Inhibits FtsZ ring formation at polar sites. Interacts either with FtsZ or with one of its binding partners to promote depolymerization.</text>
</comment>
<comment type="subcellular location">
    <subcellularLocation>
        <location evidence="1">Cell membrane</location>
        <topology evidence="1">Single-pass membrane protein</topology>
    </subcellularLocation>
    <text evidence="1">Colocalized with FtsZ to the nascent septal site.</text>
</comment>
<comment type="similarity">
    <text evidence="1">Belongs to the EzrA family.</text>
</comment>
<keyword id="KW-0131">Cell cycle</keyword>
<keyword id="KW-0132">Cell division</keyword>
<keyword id="KW-1003">Cell membrane</keyword>
<keyword id="KW-0175">Coiled coil</keyword>
<keyword id="KW-0472">Membrane</keyword>
<keyword id="KW-0717">Septation</keyword>
<keyword id="KW-0812">Transmembrane</keyword>
<keyword id="KW-1133">Transmembrane helix</keyword>